<protein>
    <recommendedName>
        <fullName evidence="1">Protein RecA</fullName>
    </recommendedName>
    <alternativeName>
        <fullName evidence="1">Recombinase A</fullName>
    </alternativeName>
</protein>
<organism>
    <name type="scientific">Parasynechococcus marenigrum (strain WH8102)</name>
    <dbReference type="NCBI Taxonomy" id="84588"/>
    <lineage>
        <taxon>Bacteria</taxon>
        <taxon>Bacillati</taxon>
        <taxon>Cyanobacteriota</taxon>
        <taxon>Cyanophyceae</taxon>
        <taxon>Synechococcales</taxon>
        <taxon>Prochlorococcaceae</taxon>
        <taxon>Parasynechococcus</taxon>
        <taxon>Parasynechococcus marenigrum</taxon>
    </lineage>
</organism>
<proteinExistence type="inferred from homology"/>
<reference key="1">
    <citation type="journal article" date="2003" name="Nature">
        <title>The genome of a motile marine Synechococcus.</title>
        <authorList>
            <person name="Palenik B."/>
            <person name="Brahamsha B."/>
            <person name="Larimer F.W."/>
            <person name="Land M.L."/>
            <person name="Hauser L."/>
            <person name="Chain P."/>
            <person name="Lamerdin J.E."/>
            <person name="Regala W."/>
            <person name="Allen E.E."/>
            <person name="McCarren J."/>
            <person name="Paulsen I.T."/>
            <person name="Dufresne A."/>
            <person name="Partensky F."/>
            <person name="Webb E.A."/>
            <person name="Waterbury J."/>
        </authorList>
    </citation>
    <scope>NUCLEOTIDE SEQUENCE [LARGE SCALE GENOMIC DNA]</scope>
    <source>
        <strain>WH8102</strain>
    </source>
</reference>
<evidence type="ECO:0000255" key="1">
    <source>
        <dbReference type="HAMAP-Rule" id="MF_00268"/>
    </source>
</evidence>
<evidence type="ECO:0000256" key="2">
    <source>
        <dbReference type="SAM" id="MobiDB-lite"/>
    </source>
</evidence>
<accession>Q7U4K5</accession>
<gene>
    <name evidence="1" type="primary">recA</name>
    <name type="ordered locus">SYNW2062</name>
</gene>
<feature type="chain" id="PRO_0000122876" description="Protein RecA">
    <location>
        <begin position="1"/>
        <end position="375"/>
    </location>
</feature>
<feature type="region of interest" description="Disordered" evidence="2">
    <location>
        <begin position="1"/>
        <end position="20"/>
    </location>
</feature>
<feature type="binding site" evidence="1">
    <location>
        <begin position="79"/>
        <end position="86"/>
    </location>
    <ligand>
        <name>ATP</name>
        <dbReference type="ChEBI" id="CHEBI:30616"/>
    </ligand>
</feature>
<keyword id="KW-0067">ATP-binding</keyword>
<keyword id="KW-0963">Cytoplasm</keyword>
<keyword id="KW-0227">DNA damage</keyword>
<keyword id="KW-0233">DNA recombination</keyword>
<keyword id="KW-0234">DNA repair</keyword>
<keyword id="KW-0238">DNA-binding</keyword>
<keyword id="KW-0547">Nucleotide-binding</keyword>
<keyword id="KW-0742">SOS response</keyword>
<sequence length="375" mass="39733">MPAEMKSAASGSDPRSSGERDKALNLVLGQIERNFGKGSIMRLGDASRMRVETISTGALTLDLALGGGYPKGRVVEIYGPESSGKTTLTLHAIAEVQKRGGVAAFVDAEHALDPVYAASLGVDVENLLVSQPDTGEMALEIVDQLVRSAAVDIVVIDSVAALTPRAEIEGEMGDLAVGSQARLMSQAMRKITGNIGKSGCTVIFLNQLRLKIGVTYGNPETTTGGNALKFYASVRLDIRRIQTLKKGTEEFGIRAKVKVAKNKVAPPFRIAEFDILFGRGISTLGCLLDLAEETGVVIRKGAWYSYEGDNIGQGRDNTITWMEENPEAAITIEQLVRQKLTEGSEVKANSMKPLAAAARTAAAAAPKATADEAAA</sequence>
<dbReference type="EMBL" id="BX569694">
    <property type="protein sequence ID" value="CAE08577.1"/>
    <property type="molecule type" value="Genomic_DNA"/>
</dbReference>
<dbReference type="RefSeq" id="WP_011128920.1">
    <property type="nucleotide sequence ID" value="NC_005070.1"/>
</dbReference>
<dbReference type="SMR" id="Q7U4K5"/>
<dbReference type="STRING" id="84588.SYNW2062"/>
<dbReference type="KEGG" id="syw:SYNW2062"/>
<dbReference type="eggNOG" id="COG0468">
    <property type="taxonomic scope" value="Bacteria"/>
</dbReference>
<dbReference type="HOGENOM" id="CLU_040469_3_2_3"/>
<dbReference type="Proteomes" id="UP000001422">
    <property type="component" value="Chromosome"/>
</dbReference>
<dbReference type="GO" id="GO:0005829">
    <property type="term" value="C:cytosol"/>
    <property type="evidence" value="ECO:0007669"/>
    <property type="project" value="TreeGrafter"/>
</dbReference>
<dbReference type="GO" id="GO:0005524">
    <property type="term" value="F:ATP binding"/>
    <property type="evidence" value="ECO:0007669"/>
    <property type="project" value="UniProtKB-UniRule"/>
</dbReference>
<dbReference type="GO" id="GO:0016887">
    <property type="term" value="F:ATP hydrolysis activity"/>
    <property type="evidence" value="ECO:0007669"/>
    <property type="project" value="InterPro"/>
</dbReference>
<dbReference type="GO" id="GO:0140664">
    <property type="term" value="F:ATP-dependent DNA damage sensor activity"/>
    <property type="evidence" value="ECO:0007669"/>
    <property type="project" value="InterPro"/>
</dbReference>
<dbReference type="GO" id="GO:0003684">
    <property type="term" value="F:damaged DNA binding"/>
    <property type="evidence" value="ECO:0007669"/>
    <property type="project" value="UniProtKB-UniRule"/>
</dbReference>
<dbReference type="GO" id="GO:0003697">
    <property type="term" value="F:single-stranded DNA binding"/>
    <property type="evidence" value="ECO:0007669"/>
    <property type="project" value="UniProtKB-UniRule"/>
</dbReference>
<dbReference type="GO" id="GO:0006310">
    <property type="term" value="P:DNA recombination"/>
    <property type="evidence" value="ECO:0007669"/>
    <property type="project" value="UniProtKB-UniRule"/>
</dbReference>
<dbReference type="GO" id="GO:0006281">
    <property type="term" value="P:DNA repair"/>
    <property type="evidence" value="ECO:0007669"/>
    <property type="project" value="UniProtKB-UniRule"/>
</dbReference>
<dbReference type="GO" id="GO:0009432">
    <property type="term" value="P:SOS response"/>
    <property type="evidence" value="ECO:0007669"/>
    <property type="project" value="UniProtKB-UniRule"/>
</dbReference>
<dbReference type="CDD" id="cd00983">
    <property type="entry name" value="RecA"/>
    <property type="match status" value="1"/>
</dbReference>
<dbReference type="FunFam" id="3.40.50.300:FF:000087">
    <property type="entry name" value="Recombinase RecA"/>
    <property type="match status" value="1"/>
</dbReference>
<dbReference type="Gene3D" id="3.40.50.300">
    <property type="entry name" value="P-loop containing nucleotide triphosphate hydrolases"/>
    <property type="match status" value="1"/>
</dbReference>
<dbReference type="HAMAP" id="MF_00268">
    <property type="entry name" value="RecA"/>
    <property type="match status" value="1"/>
</dbReference>
<dbReference type="InterPro" id="IPR003593">
    <property type="entry name" value="AAA+_ATPase"/>
</dbReference>
<dbReference type="InterPro" id="IPR013765">
    <property type="entry name" value="DNA_recomb/repair_RecA"/>
</dbReference>
<dbReference type="InterPro" id="IPR020584">
    <property type="entry name" value="DNA_recomb/repair_RecA_CS"/>
</dbReference>
<dbReference type="InterPro" id="IPR027417">
    <property type="entry name" value="P-loop_NTPase"/>
</dbReference>
<dbReference type="InterPro" id="IPR049261">
    <property type="entry name" value="RecA-like_C"/>
</dbReference>
<dbReference type="InterPro" id="IPR049428">
    <property type="entry name" value="RecA-like_N"/>
</dbReference>
<dbReference type="InterPro" id="IPR020588">
    <property type="entry name" value="RecA_ATP-bd"/>
</dbReference>
<dbReference type="InterPro" id="IPR023400">
    <property type="entry name" value="RecA_C_sf"/>
</dbReference>
<dbReference type="InterPro" id="IPR020587">
    <property type="entry name" value="RecA_monomer-monomer_interface"/>
</dbReference>
<dbReference type="NCBIfam" id="TIGR02012">
    <property type="entry name" value="tigrfam_recA"/>
    <property type="match status" value="1"/>
</dbReference>
<dbReference type="PANTHER" id="PTHR45900:SF1">
    <property type="entry name" value="MITOCHONDRIAL DNA REPAIR PROTEIN RECA HOMOLOG-RELATED"/>
    <property type="match status" value="1"/>
</dbReference>
<dbReference type="PANTHER" id="PTHR45900">
    <property type="entry name" value="RECA"/>
    <property type="match status" value="1"/>
</dbReference>
<dbReference type="Pfam" id="PF00154">
    <property type="entry name" value="RecA"/>
    <property type="match status" value="1"/>
</dbReference>
<dbReference type="Pfam" id="PF21096">
    <property type="entry name" value="RecA_C"/>
    <property type="match status" value="1"/>
</dbReference>
<dbReference type="PRINTS" id="PR00142">
    <property type="entry name" value="RECA"/>
</dbReference>
<dbReference type="SMART" id="SM00382">
    <property type="entry name" value="AAA"/>
    <property type="match status" value="1"/>
</dbReference>
<dbReference type="SUPFAM" id="SSF52540">
    <property type="entry name" value="P-loop containing nucleoside triphosphate hydrolases"/>
    <property type="match status" value="1"/>
</dbReference>
<dbReference type="SUPFAM" id="SSF54752">
    <property type="entry name" value="RecA protein, C-terminal domain"/>
    <property type="match status" value="1"/>
</dbReference>
<dbReference type="PROSITE" id="PS00321">
    <property type="entry name" value="RECA_1"/>
    <property type="match status" value="1"/>
</dbReference>
<dbReference type="PROSITE" id="PS50162">
    <property type="entry name" value="RECA_2"/>
    <property type="match status" value="1"/>
</dbReference>
<dbReference type="PROSITE" id="PS50163">
    <property type="entry name" value="RECA_3"/>
    <property type="match status" value="1"/>
</dbReference>
<name>RECA_PARMW</name>
<comment type="function">
    <text evidence="1">Can catalyze the hydrolysis of ATP in the presence of single-stranded DNA, the ATP-dependent uptake of single-stranded DNA by duplex DNA, and the ATP-dependent hybridization of homologous single-stranded DNAs. It interacts with LexA causing its activation and leading to its autocatalytic cleavage.</text>
</comment>
<comment type="subcellular location">
    <subcellularLocation>
        <location evidence="1">Cytoplasm</location>
    </subcellularLocation>
</comment>
<comment type="similarity">
    <text evidence="1">Belongs to the RecA family.</text>
</comment>